<evidence type="ECO:0000250" key="1"/>
<evidence type="ECO:0000255" key="2"/>
<evidence type="ECO:0000269" key="3">
    <source>
    </source>
</evidence>
<evidence type="ECO:0000305" key="4"/>
<protein>
    <recommendedName>
        <fullName>Protein NRT1/ PTR FAMILY 5.3</fullName>
        <shortName>AtNPF5.3</shortName>
    </recommendedName>
    <alternativeName>
        <fullName>Peptide transporter PTR3-B</fullName>
    </alternativeName>
</protein>
<sequence length="586" mass="66201">MTVEEVGDDYTKDGTVDLRGNRVRRSQTGRWKACSFVVVYEVFERMAYYGISSNLVIYMTTKLHQGTVKSSNNVTNWVGTSWLTPILGAYVADAHFGRYITFVISSAIYLLGMALLTLSVSLPGLKPPKCSTANVENCEKASVIQLAVFFGALYTLAIGTGGTKPNISTIGADQFDEFDPKDKIHKHSFFNWWMFSIFFGTFFATTVLVYVQDNVGWAIGYGLSTLGLAFSIFIFLLGTRLYRHKLPMGSPFTKMARVIVASLRKAREPMSSDSTRFYELPPMEYASKRAFPIHSTSSLRFLNRASLKTGSTHKWRLCTITEVEETKQMLKMLPVLFVTFVPSMMLAQIMTLFIKQGTTLDRRLTNNFSIPPASLLGFTTFSMLVSIVIYDRVFVKFMRKLTGNPRGITLLQRMGIGMILHILIMIIASITERYRLKVAAEHGLTHQTAVPIPLSIFTLLPQYVLMGLADAFIEIAKLEFFYDQAPESMKSLGTSYTSTSMAVGYFMSSILLSSVSQITKKQGRGWIQNNLNESRLDNYYMFFAVLNLLNFILFLVVIRFYEYRADVTQSANVEQKEPNMVDNYNE</sequence>
<dbReference type="EMBL" id="AB006698">
    <property type="protein sequence ID" value="BAB08249.1"/>
    <property type="molecule type" value="Genomic_DNA"/>
</dbReference>
<dbReference type="EMBL" id="CP002688">
    <property type="protein sequence ID" value="AED95331.1"/>
    <property type="molecule type" value="Genomic_DNA"/>
</dbReference>
<dbReference type="RefSeq" id="NP_199416.1">
    <property type="nucleotide sequence ID" value="NM_123972.1"/>
</dbReference>
<dbReference type="SMR" id="Q9FNL8"/>
<dbReference type="FunCoup" id="Q9FNL8">
    <property type="interactions" value="1654"/>
</dbReference>
<dbReference type="STRING" id="3702.Q9FNL8"/>
<dbReference type="PaxDb" id="3702-AT5G46040.1"/>
<dbReference type="ProteomicsDB" id="224836"/>
<dbReference type="EnsemblPlants" id="AT5G46040.1">
    <property type="protein sequence ID" value="AT5G46040.1"/>
    <property type="gene ID" value="AT5G46040"/>
</dbReference>
<dbReference type="GeneID" id="834645"/>
<dbReference type="Gramene" id="AT5G46040.1">
    <property type="protein sequence ID" value="AT5G46040.1"/>
    <property type="gene ID" value="AT5G46040"/>
</dbReference>
<dbReference type="KEGG" id="ath:AT5G46040"/>
<dbReference type="Araport" id="AT5G46040"/>
<dbReference type="TAIR" id="AT5G46040"/>
<dbReference type="eggNOG" id="KOG1237">
    <property type="taxonomic scope" value="Eukaryota"/>
</dbReference>
<dbReference type="HOGENOM" id="CLU_009313_4_1_1"/>
<dbReference type="InParanoid" id="Q9FNL8"/>
<dbReference type="OMA" id="MLAQIMT"/>
<dbReference type="PhylomeDB" id="Q9FNL8"/>
<dbReference type="PRO" id="PR:Q9FNL8"/>
<dbReference type="Proteomes" id="UP000006548">
    <property type="component" value="Chromosome 5"/>
</dbReference>
<dbReference type="ExpressionAtlas" id="Q9FNL8">
    <property type="expression patterns" value="baseline and differential"/>
</dbReference>
<dbReference type="GO" id="GO:0016020">
    <property type="term" value="C:membrane"/>
    <property type="evidence" value="ECO:0007669"/>
    <property type="project" value="UniProtKB-SubCell"/>
</dbReference>
<dbReference type="GO" id="GO:0071916">
    <property type="term" value="F:dipeptide transmembrane transporter activity"/>
    <property type="evidence" value="ECO:0007669"/>
    <property type="project" value="InterPro"/>
</dbReference>
<dbReference type="GO" id="GO:0042937">
    <property type="term" value="F:tripeptide transmembrane transporter activity"/>
    <property type="evidence" value="ECO:0007669"/>
    <property type="project" value="InterPro"/>
</dbReference>
<dbReference type="GO" id="GO:0009624">
    <property type="term" value="P:response to nematode"/>
    <property type="evidence" value="ECO:0007007"/>
    <property type="project" value="TAIR"/>
</dbReference>
<dbReference type="CDD" id="cd17417">
    <property type="entry name" value="MFS_NPF5"/>
    <property type="match status" value="1"/>
</dbReference>
<dbReference type="Gene3D" id="1.20.1250.20">
    <property type="entry name" value="MFS general substrate transporter like domains"/>
    <property type="match status" value="1"/>
</dbReference>
<dbReference type="InterPro" id="IPR036259">
    <property type="entry name" value="MFS_trans_sf"/>
</dbReference>
<dbReference type="InterPro" id="IPR044739">
    <property type="entry name" value="NRT1/PTR"/>
</dbReference>
<dbReference type="InterPro" id="IPR000109">
    <property type="entry name" value="POT_fam"/>
</dbReference>
<dbReference type="PANTHER" id="PTHR11654">
    <property type="entry name" value="OLIGOPEPTIDE TRANSPORTER-RELATED"/>
    <property type="match status" value="1"/>
</dbReference>
<dbReference type="Pfam" id="PF00854">
    <property type="entry name" value="PTR2"/>
    <property type="match status" value="1"/>
</dbReference>
<dbReference type="SUPFAM" id="SSF103473">
    <property type="entry name" value="MFS general substrate transporter"/>
    <property type="match status" value="1"/>
</dbReference>
<name>PTR4_ARATH</name>
<reference key="1">
    <citation type="journal article" date="1997" name="DNA Res.">
        <title>Structural analysis of Arabidopsis thaliana chromosome 5. II. Sequence features of the regions of 1,044,062 bp covered by thirteen physically assigned P1 clones.</title>
        <authorList>
            <person name="Kotani H."/>
            <person name="Nakamura Y."/>
            <person name="Sato S."/>
            <person name="Kaneko T."/>
            <person name="Asamizu E."/>
            <person name="Miyajima N."/>
            <person name="Tabata S."/>
        </authorList>
    </citation>
    <scope>NUCLEOTIDE SEQUENCE [LARGE SCALE GENOMIC DNA]</scope>
    <source>
        <strain>cv. Columbia</strain>
    </source>
</reference>
<reference key="2">
    <citation type="journal article" date="2017" name="Plant J.">
        <title>Araport11: a complete reannotation of the Arabidopsis thaliana reference genome.</title>
        <authorList>
            <person name="Cheng C.Y."/>
            <person name="Krishnakumar V."/>
            <person name="Chan A.P."/>
            <person name="Thibaud-Nissen F."/>
            <person name="Schobel S."/>
            <person name="Town C.D."/>
        </authorList>
    </citation>
    <scope>GENOME REANNOTATION</scope>
    <source>
        <strain>cv. Columbia</strain>
    </source>
</reference>
<reference key="3">
    <citation type="journal article" date="2007" name="FEBS Lett.">
        <title>Nitrate transporters and peptide transporters.</title>
        <authorList>
            <person name="Tsay Y.F."/>
            <person name="Chiu C.C."/>
            <person name="Tsai C.B."/>
            <person name="Ho C.H."/>
            <person name="Hsu P.K."/>
        </authorList>
    </citation>
    <scope>TISSUE SPECIFICITY</scope>
    <scope>GENE FAMILY</scope>
</reference>
<reference key="4">
    <citation type="journal article" date="2014" name="Trends Plant Sci.">
        <title>A unified nomenclature of NITRATE TRANSPORTER 1/PEPTIDE TRANSPORTER family members in plants.</title>
        <authorList>
            <person name="Leran S."/>
            <person name="Varala K."/>
            <person name="Boyer J.C."/>
            <person name="Chiurazzi M."/>
            <person name="Crawford N."/>
            <person name="Daniel-Vedele F."/>
            <person name="David L."/>
            <person name="Dickstein R."/>
            <person name="Fernandez E."/>
            <person name="Forde B."/>
            <person name="Gassmann W."/>
            <person name="Geiger D."/>
            <person name="Gojon A."/>
            <person name="Gong J.M."/>
            <person name="Halkier B.A."/>
            <person name="Harris J.M."/>
            <person name="Hedrich R."/>
            <person name="Limami A.M."/>
            <person name="Rentsch D."/>
            <person name="Seo M."/>
            <person name="Tsay Y.F."/>
            <person name="Zhang M."/>
            <person name="Coruzzi G."/>
            <person name="Lacombe B."/>
        </authorList>
    </citation>
    <scope>GENE FAMILY</scope>
    <scope>NOMENCLATURE</scope>
</reference>
<comment type="function">
    <text evidence="1">Peptide transporter.</text>
</comment>
<comment type="subcellular location">
    <subcellularLocation>
        <location evidence="4">Membrane</location>
        <topology evidence="4">Multi-pass membrane protein</topology>
    </subcellularLocation>
</comment>
<comment type="tissue specificity">
    <text evidence="3">Expressed in roots and siliques.</text>
</comment>
<comment type="similarity">
    <text evidence="4">Belongs to the major facilitator superfamily. Proton-dependent oligopeptide transporter (POT/PTR) (TC 2.A.17) family.</text>
</comment>
<organism>
    <name type="scientific">Arabidopsis thaliana</name>
    <name type="common">Mouse-ear cress</name>
    <dbReference type="NCBI Taxonomy" id="3702"/>
    <lineage>
        <taxon>Eukaryota</taxon>
        <taxon>Viridiplantae</taxon>
        <taxon>Streptophyta</taxon>
        <taxon>Embryophyta</taxon>
        <taxon>Tracheophyta</taxon>
        <taxon>Spermatophyta</taxon>
        <taxon>Magnoliopsida</taxon>
        <taxon>eudicotyledons</taxon>
        <taxon>Gunneridae</taxon>
        <taxon>Pentapetalae</taxon>
        <taxon>rosids</taxon>
        <taxon>malvids</taxon>
        <taxon>Brassicales</taxon>
        <taxon>Brassicaceae</taxon>
        <taxon>Camelineae</taxon>
        <taxon>Arabidopsis</taxon>
    </lineage>
</organism>
<gene>
    <name type="primary">NPF5.3</name>
    <name type="synonym">PTR3-B</name>
    <name type="ordered locus">At5g46040</name>
    <name type="ORF">MCL19.9</name>
</gene>
<feature type="chain" id="PRO_0000300101" description="Protein NRT1/ PTR FAMILY 5.3">
    <location>
        <begin position="1"/>
        <end position="586"/>
    </location>
</feature>
<feature type="transmembrane region" description="Helical" evidence="2">
    <location>
        <begin position="77"/>
        <end position="97"/>
    </location>
</feature>
<feature type="transmembrane region" description="Helical" evidence="2">
    <location>
        <begin position="100"/>
        <end position="120"/>
    </location>
</feature>
<feature type="transmembrane region" description="Helical" evidence="2">
    <location>
        <begin position="141"/>
        <end position="161"/>
    </location>
</feature>
<feature type="transmembrane region" description="Helical" evidence="2">
    <location>
        <begin position="189"/>
        <end position="209"/>
    </location>
</feature>
<feature type="transmembrane region" description="Helical" evidence="2">
    <location>
        <begin position="217"/>
        <end position="237"/>
    </location>
</feature>
<feature type="transmembrane region" description="Helical" evidence="2">
    <location>
        <begin position="334"/>
        <end position="354"/>
    </location>
</feature>
<feature type="transmembrane region" description="Helical" evidence="2">
    <location>
        <begin position="370"/>
        <end position="390"/>
    </location>
</feature>
<feature type="transmembrane region" description="Helical" evidence="2">
    <location>
        <begin position="408"/>
        <end position="428"/>
    </location>
</feature>
<feature type="transmembrane region" description="Helical" evidence="2">
    <location>
        <begin position="449"/>
        <end position="469"/>
    </location>
</feature>
<feature type="transmembrane region" description="Helical" evidence="2">
    <location>
        <begin position="492"/>
        <end position="512"/>
    </location>
</feature>
<feature type="transmembrane region" description="Helical" evidence="2">
    <location>
        <begin position="538"/>
        <end position="558"/>
    </location>
</feature>
<accession>Q9FNL8</accession>
<keyword id="KW-0472">Membrane</keyword>
<keyword id="KW-1185">Reference proteome</keyword>
<keyword id="KW-0812">Transmembrane</keyword>
<keyword id="KW-1133">Transmembrane helix</keyword>
<proteinExistence type="evidence at transcript level"/>